<dbReference type="EC" id="3.6.4.13"/>
<dbReference type="EMBL" id="DS480441">
    <property type="protein sequence ID" value="EDO15857.1"/>
    <property type="status" value="ALT_INIT"/>
    <property type="molecule type" value="Genomic_DNA"/>
</dbReference>
<dbReference type="RefSeq" id="XP_001643715.1">
    <property type="nucleotide sequence ID" value="XM_001643665.1"/>
</dbReference>
<dbReference type="SMR" id="A7TPC9"/>
<dbReference type="FunCoup" id="A7TPC9">
    <property type="interactions" value="1058"/>
</dbReference>
<dbReference type="STRING" id="436907.A7TPC9"/>
<dbReference type="GeneID" id="5543990"/>
<dbReference type="KEGG" id="vpo:Kpol_1009p3"/>
<dbReference type="eggNOG" id="KOG0346">
    <property type="taxonomic scope" value="Eukaryota"/>
</dbReference>
<dbReference type="HOGENOM" id="CLU_003041_17_1_1"/>
<dbReference type="InParanoid" id="A7TPC9"/>
<dbReference type="OrthoDB" id="1191041at2759"/>
<dbReference type="Proteomes" id="UP000000267">
    <property type="component" value="Unassembled WGS sequence"/>
</dbReference>
<dbReference type="GO" id="GO:0005829">
    <property type="term" value="C:cytosol"/>
    <property type="evidence" value="ECO:0007669"/>
    <property type="project" value="TreeGrafter"/>
</dbReference>
<dbReference type="GO" id="GO:0005730">
    <property type="term" value="C:nucleolus"/>
    <property type="evidence" value="ECO:0007669"/>
    <property type="project" value="UniProtKB-SubCell"/>
</dbReference>
<dbReference type="GO" id="GO:0005524">
    <property type="term" value="F:ATP binding"/>
    <property type="evidence" value="ECO:0007669"/>
    <property type="project" value="UniProtKB-KW"/>
</dbReference>
<dbReference type="GO" id="GO:0016887">
    <property type="term" value="F:ATP hydrolysis activity"/>
    <property type="evidence" value="ECO:0007669"/>
    <property type="project" value="RHEA"/>
</dbReference>
<dbReference type="GO" id="GO:0003723">
    <property type="term" value="F:RNA binding"/>
    <property type="evidence" value="ECO:0007669"/>
    <property type="project" value="UniProtKB-KW"/>
</dbReference>
<dbReference type="GO" id="GO:0003724">
    <property type="term" value="F:RNA helicase activity"/>
    <property type="evidence" value="ECO:0007669"/>
    <property type="project" value="UniProtKB-EC"/>
</dbReference>
<dbReference type="GO" id="GO:0006364">
    <property type="term" value="P:rRNA processing"/>
    <property type="evidence" value="ECO:0007669"/>
    <property type="project" value="UniProtKB-KW"/>
</dbReference>
<dbReference type="CDD" id="cd17961">
    <property type="entry name" value="DEADc_DDX56"/>
    <property type="match status" value="1"/>
</dbReference>
<dbReference type="CDD" id="cd18787">
    <property type="entry name" value="SF2_C_DEAD"/>
    <property type="match status" value="1"/>
</dbReference>
<dbReference type="FunFam" id="3.40.50.300:FF:001046">
    <property type="entry name" value="Probable ATP-dependent RNA helicase ddx56"/>
    <property type="match status" value="1"/>
</dbReference>
<dbReference type="Gene3D" id="3.40.50.300">
    <property type="entry name" value="P-loop containing nucleotide triphosphate hydrolases"/>
    <property type="match status" value="2"/>
</dbReference>
<dbReference type="InterPro" id="IPR011545">
    <property type="entry name" value="DEAD/DEAH_box_helicase_dom"/>
</dbReference>
<dbReference type="InterPro" id="IPR050079">
    <property type="entry name" value="DEAD_box_RNA_helicase"/>
</dbReference>
<dbReference type="InterPro" id="IPR014001">
    <property type="entry name" value="Helicase_ATP-bd"/>
</dbReference>
<dbReference type="InterPro" id="IPR001650">
    <property type="entry name" value="Helicase_C-like"/>
</dbReference>
<dbReference type="InterPro" id="IPR027417">
    <property type="entry name" value="P-loop_NTPase"/>
</dbReference>
<dbReference type="InterPro" id="IPR014014">
    <property type="entry name" value="RNA_helicase_DEAD_Q_motif"/>
</dbReference>
<dbReference type="PANTHER" id="PTHR47959">
    <property type="entry name" value="ATP-DEPENDENT RNA HELICASE RHLE-RELATED"/>
    <property type="match status" value="1"/>
</dbReference>
<dbReference type="PANTHER" id="PTHR47959:SF21">
    <property type="entry name" value="DEAD-BOX HELICASE 56"/>
    <property type="match status" value="1"/>
</dbReference>
<dbReference type="Pfam" id="PF00270">
    <property type="entry name" value="DEAD"/>
    <property type="match status" value="1"/>
</dbReference>
<dbReference type="Pfam" id="PF00271">
    <property type="entry name" value="Helicase_C"/>
    <property type="match status" value="2"/>
</dbReference>
<dbReference type="SMART" id="SM00487">
    <property type="entry name" value="DEXDc"/>
    <property type="match status" value="1"/>
</dbReference>
<dbReference type="SMART" id="SM00490">
    <property type="entry name" value="HELICc"/>
    <property type="match status" value="1"/>
</dbReference>
<dbReference type="SUPFAM" id="SSF52540">
    <property type="entry name" value="P-loop containing nucleoside triphosphate hydrolases"/>
    <property type="match status" value="2"/>
</dbReference>
<dbReference type="PROSITE" id="PS51192">
    <property type="entry name" value="HELICASE_ATP_BIND_1"/>
    <property type="match status" value="1"/>
</dbReference>
<dbReference type="PROSITE" id="PS51194">
    <property type="entry name" value="HELICASE_CTER"/>
    <property type="match status" value="1"/>
</dbReference>
<dbReference type="PROSITE" id="PS51195">
    <property type="entry name" value="Q_MOTIF"/>
    <property type="match status" value="1"/>
</dbReference>
<organism>
    <name type="scientific">Vanderwaltozyma polyspora (strain ATCC 22028 / DSM 70294 / BCRC 21397 / CBS 2163 / NBRC 10782 / NRRL Y-8283 / UCD 57-17)</name>
    <name type="common">Kluyveromyces polysporus</name>
    <dbReference type="NCBI Taxonomy" id="436907"/>
    <lineage>
        <taxon>Eukaryota</taxon>
        <taxon>Fungi</taxon>
        <taxon>Dikarya</taxon>
        <taxon>Ascomycota</taxon>
        <taxon>Saccharomycotina</taxon>
        <taxon>Saccharomycetes</taxon>
        <taxon>Saccharomycetales</taxon>
        <taxon>Saccharomycetaceae</taxon>
        <taxon>Vanderwaltozyma</taxon>
    </lineage>
</organism>
<evidence type="ECO:0000250" key="1"/>
<evidence type="ECO:0000255" key="2">
    <source>
        <dbReference type="PROSITE-ProRule" id="PRU00541"/>
    </source>
</evidence>
<evidence type="ECO:0000255" key="3">
    <source>
        <dbReference type="PROSITE-ProRule" id="PRU00542"/>
    </source>
</evidence>
<evidence type="ECO:0000256" key="4">
    <source>
        <dbReference type="SAM" id="MobiDB-lite"/>
    </source>
</evidence>
<evidence type="ECO:0000305" key="5"/>
<protein>
    <recommendedName>
        <fullName>ATP-dependent RNA helicase DBP9</fullName>
        <ecNumber>3.6.4.13</ecNumber>
    </recommendedName>
</protein>
<gene>
    <name type="primary">DBP9</name>
    <name type="ORF">Kpol_1009p3</name>
</gene>
<reference key="1">
    <citation type="journal article" date="2007" name="Proc. Natl. Acad. Sci. U.S.A.">
        <title>Independent sorting-out of thousands of duplicated gene pairs in two yeast species descended from a whole-genome duplication.</title>
        <authorList>
            <person name="Scannell D.R."/>
            <person name="Frank A.C."/>
            <person name="Conant G.C."/>
            <person name="Byrne K.P."/>
            <person name="Woolfit M."/>
            <person name="Wolfe K.H."/>
        </authorList>
    </citation>
    <scope>NUCLEOTIDE SEQUENCE [LARGE SCALE GENOMIC DNA]</scope>
    <source>
        <strain>ATCC 22028 / DSM 70294 / BCRC 21397 / CBS 2163 / NBRC 10782 / NRRL Y-8283 / UCD 57-17</strain>
    </source>
</reference>
<sequence>MSSSEVLAPEAYIDDSISFESLQLDTRLLQAIKRNGFKNPTLIQSHAIPLALQEKRDIIAKAATGCGKTLAYLIPVIQTILDYKKTNTDKIDGTSNTLGIILVPTRELAQQVNDVLDKMILYCSNDIRSLNISSDMPSSVLTSLLLEKPEIIIATPGKLMTLLDTNVESVSLEELKFLVIDEVDLVLTFGYKEDLSKIAEYLPLKKNLQTFLMSATLNDDIQELKKEFCRAPAILKFNDDEISKDKNKLIQYYVKTSEFDKFLLCYVIFKLGLIKGKTLIFVNNIDRGYRLKLVLEQFGIKSCILNSELPANSRQHIVDQFNKNVYHLLIATDDTEYIKEEDEENDDEIETNSEEQDKVEDSNDTKDKKGKKASKIKKDKEFGVSRGVDFQNVACVLNFDLPTTAKSYVHRIGRTARAGKTGTAISFVVPLKEFGKHKPSMYQSTKRDEKILSRIIKQQSKLGLELQPYSFDTKQIEGFRYRMEDGFRAVTQVAIREARVKELKDELLASEKLKRHFEENPQELQSLRHDKELHPSRVQQHLKRVPDYLLPAEAREGKKKVGFVPFHSVKKSNRHKKNNKVFKKRSGSKSDPLKNFK</sequence>
<name>DBP9_VANPO</name>
<accession>A7TPC9</accession>
<feature type="chain" id="PRO_0000310257" description="ATP-dependent RNA helicase DBP9">
    <location>
        <begin position="1"/>
        <end position="597"/>
    </location>
</feature>
<feature type="domain" description="Helicase ATP-binding" evidence="2">
    <location>
        <begin position="49"/>
        <end position="235"/>
    </location>
</feature>
<feature type="domain" description="Helicase C-terminal" evidence="3">
    <location>
        <begin position="248"/>
        <end position="477"/>
    </location>
</feature>
<feature type="region of interest" description="Disordered" evidence="4">
    <location>
        <begin position="340"/>
        <end position="373"/>
    </location>
</feature>
<feature type="region of interest" description="Disordered" evidence="4">
    <location>
        <begin position="521"/>
        <end position="540"/>
    </location>
</feature>
<feature type="region of interest" description="Disordered" evidence="4">
    <location>
        <begin position="561"/>
        <end position="597"/>
    </location>
</feature>
<feature type="short sequence motif" description="Q motif">
    <location>
        <begin position="17"/>
        <end position="45"/>
    </location>
</feature>
<feature type="short sequence motif" description="DEAD box">
    <location>
        <begin position="181"/>
        <end position="184"/>
    </location>
</feature>
<feature type="compositionally biased region" description="Acidic residues" evidence="4">
    <location>
        <begin position="340"/>
        <end position="354"/>
    </location>
</feature>
<feature type="compositionally biased region" description="Basic and acidic residues" evidence="4">
    <location>
        <begin position="355"/>
        <end position="367"/>
    </location>
</feature>
<feature type="compositionally biased region" description="Basic and acidic residues" evidence="4">
    <location>
        <begin position="526"/>
        <end position="535"/>
    </location>
</feature>
<feature type="compositionally biased region" description="Basic residues" evidence="4">
    <location>
        <begin position="568"/>
        <end position="587"/>
    </location>
</feature>
<feature type="binding site" evidence="2">
    <location>
        <begin position="62"/>
        <end position="69"/>
    </location>
    <ligand>
        <name>ATP</name>
        <dbReference type="ChEBI" id="CHEBI:30616"/>
    </ligand>
</feature>
<comment type="function">
    <text evidence="1">ATP-binding RNA helicase involved in the biogenesis of 60S ribosomal subunits and is required for the normal formation of 25S and 5.8S rRNAs.</text>
</comment>
<comment type="catalytic activity">
    <reaction>
        <text>ATP + H2O = ADP + phosphate + H(+)</text>
        <dbReference type="Rhea" id="RHEA:13065"/>
        <dbReference type="ChEBI" id="CHEBI:15377"/>
        <dbReference type="ChEBI" id="CHEBI:15378"/>
        <dbReference type="ChEBI" id="CHEBI:30616"/>
        <dbReference type="ChEBI" id="CHEBI:43474"/>
        <dbReference type="ChEBI" id="CHEBI:456216"/>
        <dbReference type="EC" id="3.6.4.13"/>
    </reaction>
</comment>
<comment type="subcellular location">
    <subcellularLocation>
        <location evidence="1">Nucleus</location>
        <location evidence="1">Nucleolus</location>
    </subcellularLocation>
</comment>
<comment type="domain">
    <text>The Q motif is unique to and characteristic of the DEAD box family of RNA helicases and controls ATP binding and hydrolysis.</text>
</comment>
<comment type="similarity">
    <text evidence="5">Belongs to the DEAD box helicase family. DDX56/DBP9 subfamily.</text>
</comment>
<comment type="sequence caution" evidence="5">
    <conflict type="erroneous initiation">
        <sequence resource="EMBL-CDS" id="EDO15857"/>
    </conflict>
</comment>
<keyword id="KW-0067">ATP-binding</keyword>
<keyword id="KW-0347">Helicase</keyword>
<keyword id="KW-0378">Hydrolase</keyword>
<keyword id="KW-0547">Nucleotide-binding</keyword>
<keyword id="KW-0539">Nucleus</keyword>
<keyword id="KW-1185">Reference proteome</keyword>
<keyword id="KW-0690">Ribosome biogenesis</keyword>
<keyword id="KW-0694">RNA-binding</keyword>
<keyword id="KW-0698">rRNA processing</keyword>
<proteinExistence type="inferred from homology"/>